<gene>
    <name type="primary">grlA</name>
    <name type="ORF">DDB_G0271684</name>
</gene>
<protein>
    <recommendedName>
        <fullName>Metabotropic glutamate receptor-like protein A</fullName>
    </recommendedName>
</protein>
<comment type="function">
    <text evidence="4">May play an important role in the terminal differentiation.</text>
</comment>
<comment type="subcellular location">
    <subcellularLocation>
        <location evidence="5">Membrane</location>
        <topology evidence="5">Multi-pass membrane protein</topology>
    </subcellularLocation>
    <subcellularLocation>
        <location evidence="4">Cytoplasm</location>
        <location evidence="4">Cell cortex</location>
    </subcellularLocation>
    <subcellularLocation>
        <location evidence="4">Cytoplasm</location>
        <location evidence="4">Perinuclear region</location>
    </subcellularLocation>
</comment>
<comment type="developmental stage">
    <text evidence="3 4">Expressed throughout growth and development and shows increased levels during the post aggregation stages. Abundantly expressed when fruiting body formation is close to completion.</text>
</comment>
<comment type="disruption phenotype">
    <text evidence="4">Cells have tip formation delayed by 3 to 4 hours and complete development with normally shaped fruiting bodies only after 26-27 hour. Cells are able to form normally shaped mature fruiting bodies, however with a lower number of produced spores.</text>
</comment>
<comment type="similarity">
    <text evidence="5">In the N-terminal section; belongs to the BMP lipoprotein family.</text>
</comment>
<comment type="similarity">
    <text evidence="5">In the C-terminal section; belongs to the G-protein coupled receptor 3 family. GABA-B receptor subfamily.</text>
</comment>
<proteinExistence type="evidence at transcript level"/>
<organism>
    <name type="scientific">Dictyostelium discoideum</name>
    <name type="common">Social amoeba</name>
    <dbReference type="NCBI Taxonomy" id="44689"/>
    <lineage>
        <taxon>Eukaryota</taxon>
        <taxon>Amoebozoa</taxon>
        <taxon>Evosea</taxon>
        <taxon>Eumycetozoa</taxon>
        <taxon>Dictyostelia</taxon>
        <taxon>Dictyosteliales</taxon>
        <taxon>Dictyosteliaceae</taxon>
        <taxon>Dictyostelium</taxon>
    </lineage>
</organism>
<dbReference type="EMBL" id="AAFI02000006">
    <property type="protein sequence ID" value="EAL71532.1"/>
    <property type="molecule type" value="Genomic_DNA"/>
</dbReference>
<dbReference type="RefSeq" id="XP_645481.1">
    <property type="nucleotide sequence ID" value="XM_640389.1"/>
</dbReference>
<dbReference type="SMR" id="Q55AP1"/>
<dbReference type="FunCoup" id="Q55AP1">
    <property type="interactions" value="10"/>
</dbReference>
<dbReference type="STRING" id="44689.Q55AP1"/>
<dbReference type="GlyCosmos" id="Q55AP1">
    <property type="glycosylation" value="3 sites, No reported glycans"/>
</dbReference>
<dbReference type="GlyGen" id="Q55AP1">
    <property type="glycosylation" value="3 sites"/>
</dbReference>
<dbReference type="PaxDb" id="44689-DDB0231963"/>
<dbReference type="EnsemblProtists" id="EAL71532">
    <property type="protein sequence ID" value="EAL71532"/>
    <property type="gene ID" value="DDB_G0271684"/>
</dbReference>
<dbReference type="GeneID" id="8618109"/>
<dbReference type="KEGG" id="ddi:DDB_G0271684"/>
<dbReference type="dictyBase" id="DDB_G0271684">
    <property type="gene designation" value="grlA"/>
</dbReference>
<dbReference type="VEuPathDB" id="AmoebaDB:DDB_G0271684"/>
<dbReference type="eggNOG" id="KOG1055">
    <property type="taxonomic scope" value="Eukaryota"/>
</dbReference>
<dbReference type="HOGENOM" id="CLU_365408_0_0_1"/>
<dbReference type="InParanoid" id="Q55AP1"/>
<dbReference type="OMA" id="CRSRIWL"/>
<dbReference type="PhylomeDB" id="Q55AP1"/>
<dbReference type="PRO" id="PR:Q55AP1"/>
<dbReference type="Proteomes" id="UP000002195">
    <property type="component" value="Chromosome 2"/>
</dbReference>
<dbReference type="GO" id="GO:0005938">
    <property type="term" value="C:cell cortex"/>
    <property type="evidence" value="ECO:0007669"/>
    <property type="project" value="UniProtKB-SubCell"/>
</dbReference>
<dbReference type="GO" id="GO:0005789">
    <property type="term" value="C:endoplasmic reticulum membrane"/>
    <property type="evidence" value="ECO:0000314"/>
    <property type="project" value="dictyBase"/>
</dbReference>
<dbReference type="GO" id="GO:0005635">
    <property type="term" value="C:nuclear envelope"/>
    <property type="evidence" value="ECO:0000314"/>
    <property type="project" value="dictyBase"/>
</dbReference>
<dbReference type="GO" id="GO:0048471">
    <property type="term" value="C:perinuclear region of cytoplasm"/>
    <property type="evidence" value="ECO:0007669"/>
    <property type="project" value="UniProtKB-SubCell"/>
</dbReference>
<dbReference type="GO" id="GO:0005886">
    <property type="term" value="C:plasma membrane"/>
    <property type="evidence" value="ECO:0000314"/>
    <property type="project" value="dictyBase"/>
</dbReference>
<dbReference type="GO" id="GO:0004930">
    <property type="term" value="F:G protein-coupled receptor activity"/>
    <property type="evidence" value="ECO:0000318"/>
    <property type="project" value="GO_Central"/>
</dbReference>
<dbReference type="GO" id="GO:0007186">
    <property type="term" value="P:G protein-coupled receptor signaling pathway"/>
    <property type="evidence" value="ECO:0000318"/>
    <property type="project" value="GO_Central"/>
</dbReference>
<dbReference type="GO" id="GO:0030587">
    <property type="term" value="P:sorocarp development"/>
    <property type="evidence" value="ECO:0000315"/>
    <property type="project" value="dictyBase"/>
</dbReference>
<dbReference type="GO" id="GO:0030435">
    <property type="term" value="P:sporulation resulting in formation of a cellular spore"/>
    <property type="evidence" value="ECO:0000315"/>
    <property type="project" value="dictyBase"/>
</dbReference>
<dbReference type="CDD" id="cd15047">
    <property type="entry name" value="7tmC_GABA-B-like"/>
    <property type="match status" value="1"/>
</dbReference>
<dbReference type="FunFam" id="3.40.50.2300:FF:000581">
    <property type="entry name" value="Metabotropic glutamate receptor-like protein D"/>
    <property type="match status" value="1"/>
</dbReference>
<dbReference type="Gene3D" id="3.40.50.2300">
    <property type="match status" value="2"/>
</dbReference>
<dbReference type="InterPro" id="IPR017978">
    <property type="entry name" value="GPCR_3_C"/>
</dbReference>
<dbReference type="InterPro" id="IPR051530">
    <property type="entry name" value="mGluR/GABA-B-like"/>
</dbReference>
<dbReference type="InterPro" id="IPR028082">
    <property type="entry name" value="Peripla_BP_I"/>
</dbReference>
<dbReference type="InterPro" id="IPR003760">
    <property type="entry name" value="PnrA-like"/>
</dbReference>
<dbReference type="PANTHER" id="PTHR46924:SF2">
    <property type="entry name" value="METABOTROPIC GLUTAMATE RECEPTOR-LIKE PROTEIN A-RELATED"/>
    <property type="match status" value="1"/>
</dbReference>
<dbReference type="PANTHER" id="PTHR46924">
    <property type="entry name" value="METABOTROPIC GLUTAMATE RECEPTOR-LIKE PROTEIN C-RELATED-RELATED"/>
    <property type="match status" value="1"/>
</dbReference>
<dbReference type="Pfam" id="PF00003">
    <property type="entry name" value="7tm_3"/>
    <property type="match status" value="1"/>
</dbReference>
<dbReference type="Pfam" id="PF02608">
    <property type="entry name" value="Bmp"/>
    <property type="match status" value="1"/>
</dbReference>
<dbReference type="SUPFAM" id="SSF53822">
    <property type="entry name" value="Periplasmic binding protein-like I"/>
    <property type="match status" value="1"/>
</dbReference>
<dbReference type="PROSITE" id="PS50259">
    <property type="entry name" value="G_PROTEIN_RECEP_F3_4"/>
    <property type="match status" value="1"/>
</dbReference>
<evidence type="ECO:0000255" key="1"/>
<evidence type="ECO:0000256" key="2">
    <source>
        <dbReference type="SAM" id="MobiDB-lite"/>
    </source>
</evidence>
<evidence type="ECO:0000269" key="3">
    <source>
    </source>
</evidence>
<evidence type="ECO:0000269" key="4">
    <source>
    </source>
</evidence>
<evidence type="ECO:0000305" key="5"/>
<accession>Q55AP1</accession>
<sequence>MNKLKFLIILFITFLFNLKYINSLKQCKISVLLSGDWSDMGYNYQMNNARIKAESALNLEMSLCYKNLEVSIDLAKQAIEDSIKKGANFIVISSSVHTSIGYEYARLHRDKDIYWLIRGRGRPVPDDLPKVAVINFNTHLLHYTLGLVSGYLTTSGTVGFISPGPQILALANSNSFYLGALASRKNVTFLNAYTGSWYNPEVAYKASQMLISNGADFIGMSQDDMSVQKALMDSGKMALGITGFSNRLIWGSDIALSYITDWSDVFIKYAGHILNDTWPEYTDYYTTLAEGGSLLFDTFSYRVPSEVQKLVSLEIEKLKNSSYQPFRCNPMYSQINLNFDSNGCANDMEFKNTKLLLKGTDISKTINLGLYTIPIEFVDYSNSMKLGLTIVSGFCILFCIISMVLVIMFRHAKIIKSASPIFCLLILFGCIIIFSGCIIFSLSPTDGICGARVWLLSIGYTIFLGSLLVKNWRIWLLFDNPKLKKRSITNWKLYPFVAGILAADVLILALWQGLGDIRSESRIGIDSLTKYQYANVCSSNDQGSVALYILLVFHGIKLLAACFISFKIKAVDIEEFNESKPIASSIYIITFCLFIVIPLMVSPQSVASQVITIVVCAIVTTLISISLLFGSKFYMMATQGLALNQTFATNTKSSSFSLSLEKQKSKSNGLEFEDSDESEEKLPQIKNYSNSEIPNLQHNHSRLAHFSSDSCTSAEQDSKLDLENQNDENEIENNQNNQNNIVEDCQKVEKLEKDENLEKDENLEKDENLEKDNENQSIIQKKRLSKNFNQSEIDPDDV</sequence>
<keyword id="KW-0175">Coiled coil</keyword>
<keyword id="KW-0963">Cytoplasm</keyword>
<keyword id="KW-0297">G-protein coupled receptor</keyword>
<keyword id="KW-0325">Glycoprotein</keyword>
<keyword id="KW-0472">Membrane</keyword>
<keyword id="KW-0675">Receptor</keyword>
<keyword id="KW-1185">Reference proteome</keyword>
<keyword id="KW-0732">Signal</keyword>
<keyword id="KW-0807">Transducer</keyword>
<keyword id="KW-0812">Transmembrane</keyword>
<keyword id="KW-1133">Transmembrane helix</keyword>
<reference key="1">
    <citation type="journal article" date="2002" name="Nature">
        <title>Sequence and analysis of chromosome 2 of Dictyostelium discoideum.</title>
        <authorList>
            <person name="Gloeckner G."/>
            <person name="Eichinger L."/>
            <person name="Szafranski K."/>
            <person name="Pachebat J.A."/>
            <person name="Bankier A.T."/>
            <person name="Dear P.H."/>
            <person name="Lehmann R."/>
            <person name="Baumgart C."/>
            <person name="Parra G."/>
            <person name="Abril J.F."/>
            <person name="Guigo R."/>
            <person name="Kumpf K."/>
            <person name="Tunggal B."/>
            <person name="Cox E.C."/>
            <person name="Quail M.A."/>
            <person name="Platzer M."/>
            <person name="Rosenthal A."/>
            <person name="Noegel A.A."/>
        </authorList>
    </citation>
    <scope>NUCLEOTIDE SEQUENCE [LARGE SCALE GENOMIC DNA]</scope>
    <source>
        <strain>AX4</strain>
    </source>
</reference>
<reference key="2">
    <citation type="journal article" date="2005" name="Nature">
        <title>The genome of the social amoeba Dictyostelium discoideum.</title>
        <authorList>
            <person name="Eichinger L."/>
            <person name="Pachebat J.A."/>
            <person name="Gloeckner G."/>
            <person name="Rajandream M.A."/>
            <person name="Sucgang R."/>
            <person name="Berriman M."/>
            <person name="Song J."/>
            <person name="Olsen R."/>
            <person name="Szafranski K."/>
            <person name="Xu Q."/>
            <person name="Tunggal B."/>
            <person name="Kummerfeld S."/>
            <person name="Madera M."/>
            <person name="Konfortov B.A."/>
            <person name="Rivero F."/>
            <person name="Bankier A.T."/>
            <person name="Lehmann R."/>
            <person name="Hamlin N."/>
            <person name="Davies R."/>
            <person name="Gaudet P."/>
            <person name="Fey P."/>
            <person name="Pilcher K."/>
            <person name="Chen G."/>
            <person name="Saunders D."/>
            <person name="Sodergren E.J."/>
            <person name="Davis P."/>
            <person name="Kerhornou A."/>
            <person name="Nie X."/>
            <person name="Hall N."/>
            <person name="Anjard C."/>
            <person name="Hemphill L."/>
            <person name="Bason N."/>
            <person name="Farbrother P."/>
            <person name="Desany B."/>
            <person name="Just E."/>
            <person name="Morio T."/>
            <person name="Rost R."/>
            <person name="Churcher C.M."/>
            <person name="Cooper J."/>
            <person name="Haydock S."/>
            <person name="van Driessche N."/>
            <person name="Cronin A."/>
            <person name="Goodhead I."/>
            <person name="Muzny D.M."/>
            <person name="Mourier T."/>
            <person name="Pain A."/>
            <person name="Lu M."/>
            <person name="Harper D."/>
            <person name="Lindsay R."/>
            <person name="Hauser H."/>
            <person name="James K.D."/>
            <person name="Quiles M."/>
            <person name="Madan Babu M."/>
            <person name="Saito T."/>
            <person name="Buchrieser C."/>
            <person name="Wardroper A."/>
            <person name="Felder M."/>
            <person name="Thangavelu M."/>
            <person name="Johnson D."/>
            <person name="Knights A."/>
            <person name="Loulseged H."/>
            <person name="Mungall K.L."/>
            <person name="Oliver K."/>
            <person name="Price C."/>
            <person name="Quail M.A."/>
            <person name="Urushihara H."/>
            <person name="Hernandez J."/>
            <person name="Rabbinowitsch E."/>
            <person name="Steffen D."/>
            <person name="Sanders M."/>
            <person name="Ma J."/>
            <person name="Kohara Y."/>
            <person name="Sharp S."/>
            <person name="Simmonds M.N."/>
            <person name="Spiegler S."/>
            <person name="Tivey A."/>
            <person name="Sugano S."/>
            <person name="White B."/>
            <person name="Walker D."/>
            <person name="Woodward J.R."/>
            <person name="Winckler T."/>
            <person name="Tanaka Y."/>
            <person name="Shaulsky G."/>
            <person name="Schleicher M."/>
            <person name="Weinstock G.M."/>
            <person name="Rosenthal A."/>
            <person name="Cox E.C."/>
            <person name="Chisholm R.L."/>
            <person name="Gibbs R.A."/>
            <person name="Loomis W.F."/>
            <person name="Platzer M."/>
            <person name="Kay R.R."/>
            <person name="Williams J.G."/>
            <person name="Dear P.H."/>
            <person name="Noegel A.A."/>
            <person name="Barrell B.G."/>
            <person name="Kuspa A."/>
        </authorList>
    </citation>
    <scope>NUCLEOTIDE SEQUENCE [LARGE SCALE GENOMIC DNA]</scope>
    <source>
        <strain>AX4</strain>
    </source>
</reference>
<reference key="3">
    <citation type="journal article" date="2006" name="Eur. J. Cell Biol.">
        <title>The Dictyostelium repertoire of seven transmembrane domain receptors.</title>
        <authorList>
            <person name="Prabhu Y."/>
            <person name="Eichinger L."/>
        </authorList>
    </citation>
    <scope>NOMENCLATURE</scope>
</reference>
<reference key="4">
    <citation type="journal article" date="2007" name="BMC Dev. Biol.">
        <title>GrlJ, a Dictyostelium GABAB-like receptor with roles in post-aggregation development.</title>
        <authorList>
            <person name="Prabhu Y."/>
            <person name="Mueller R."/>
            <person name="Anjard C."/>
            <person name="Noegel A.A."/>
        </authorList>
    </citation>
    <scope>DEVELOPMENTAL STAGE</scope>
</reference>
<reference key="5">
    <citation type="journal article" date="2007" name="Dev. Biol.">
        <title>A GPCR involved in post aggregation events in Dictyostelium discoideum.</title>
        <authorList>
            <person name="Prabhu Y."/>
            <person name="Mondal S."/>
            <person name="Eichinger L."/>
            <person name="Noegel A.A."/>
        </authorList>
    </citation>
    <scope>DEVELOPMENTAL STAGE</scope>
    <scope>SUBCELLULAR LOCATION</scope>
    <scope>FUNCTION</scope>
    <scope>DISRUPTION PHENOTYPE</scope>
</reference>
<feature type="signal peptide" evidence="1">
    <location>
        <begin position="1"/>
        <end position="23"/>
    </location>
</feature>
<feature type="chain" id="PRO_0000370346" description="Metabotropic glutamate receptor-like protein A">
    <location>
        <begin position="24"/>
        <end position="798"/>
    </location>
</feature>
<feature type="topological domain" description="Extracellular" evidence="1">
    <location>
        <begin position="24"/>
        <end position="388"/>
    </location>
</feature>
<feature type="transmembrane region" description="Helical; Name=1" evidence="1">
    <location>
        <begin position="389"/>
        <end position="409"/>
    </location>
</feature>
<feature type="topological domain" description="Cytoplasmic" evidence="1">
    <location>
        <begin position="410"/>
        <end position="419"/>
    </location>
</feature>
<feature type="transmembrane region" description="Helical; Name=2" evidence="1">
    <location>
        <begin position="420"/>
        <end position="440"/>
    </location>
</feature>
<feature type="topological domain" description="Extracellular" evidence="1">
    <location>
        <begin position="441"/>
        <end position="447"/>
    </location>
</feature>
<feature type="transmembrane region" description="Helical; Name=3" evidence="1">
    <location>
        <begin position="448"/>
        <end position="468"/>
    </location>
</feature>
<feature type="topological domain" description="Cytoplasmic" evidence="1">
    <location>
        <begin position="469"/>
        <end position="494"/>
    </location>
</feature>
<feature type="transmembrane region" description="Helical; Name=4" evidence="1">
    <location>
        <begin position="495"/>
        <end position="515"/>
    </location>
</feature>
<feature type="topological domain" description="Extracellular" evidence="1">
    <location>
        <begin position="516"/>
        <end position="545"/>
    </location>
</feature>
<feature type="transmembrane region" description="Helical; Name=5" evidence="1">
    <location>
        <begin position="546"/>
        <end position="566"/>
    </location>
</feature>
<feature type="topological domain" description="Cytoplasmic" evidence="1">
    <location>
        <begin position="567"/>
        <end position="580"/>
    </location>
</feature>
<feature type="transmembrane region" description="Helical; Name=6" evidence="1">
    <location>
        <begin position="581"/>
        <end position="601"/>
    </location>
</feature>
<feature type="topological domain" description="Extracellular" evidence="1">
    <location>
        <begin position="602"/>
        <end position="609"/>
    </location>
</feature>
<feature type="transmembrane region" description="Helical; Name=7" evidence="1">
    <location>
        <begin position="610"/>
        <end position="630"/>
    </location>
</feature>
<feature type="topological domain" description="Cytoplasmic" evidence="1">
    <location>
        <begin position="631"/>
        <end position="798"/>
    </location>
</feature>
<feature type="region of interest" description="Disordered" evidence="2">
    <location>
        <begin position="752"/>
        <end position="798"/>
    </location>
</feature>
<feature type="coiled-coil region" evidence="1">
    <location>
        <begin position="714"/>
        <end position="771"/>
    </location>
</feature>
<feature type="compositionally biased region" description="Basic and acidic residues" evidence="2">
    <location>
        <begin position="752"/>
        <end position="774"/>
    </location>
</feature>
<feature type="glycosylation site" description="N-linked (GlcNAc...) asparagine" evidence="1">
    <location>
        <position position="186"/>
    </location>
</feature>
<feature type="glycosylation site" description="N-linked (GlcNAc...) asparagine" evidence="1">
    <location>
        <position position="275"/>
    </location>
</feature>
<feature type="glycosylation site" description="N-linked (GlcNAc...) asparagine" evidence="1">
    <location>
        <position position="320"/>
    </location>
</feature>
<name>GRLA_DICDI</name>